<gene>
    <name type="primary">unc-119</name>
    <name type="ORF">M142.1</name>
</gene>
<proteinExistence type="evidence at protein level"/>
<comment type="function">
    <text evidence="4 5">Myristoyl-binding protein that acts as a cargo adapter: specifically binds the myristoyl moiety of a subset of N-terminally myristoylated proteins and is required for their localization. Plays a key role in ciliary membrane localization of proteins. Required for the establishment or function of the nervous system.</text>
</comment>
<comment type="interaction">
    <interactant intactId="EBI-325431">
        <id>Q10658</id>
    </interactant>
    <interactant intactId="EBI-325438">
        <id>O45379</id>
        <label>arl-3</label>
    </interactant>
    <organismsDiffer>false</organismsDiffer>
    <experiments>5</experiments>
</comment>
<comment type="tissue specificity">
    <text evidence="5">Predominantly neuron-specific.</text>
</comment>
<comment type="domain">
    <text evidence="1">Adopts an immunoglobulin-like beta-sandwich fold forming a hydrophobic cavity that capture N-terminally myristoylated target peptides. Phe residues within the hydrophobic beta sandwich are required for myristate binding (By similarity).</text>
</comment>
<comment type="disruption phenotype">
    <text evidence="3 5">Worms exhibit diverse nervous system defects including defects in feeding behavior and chemosensation. Phenotypes are due to defects in protein trafficking, such as mislocalization of odr-3 and gpa-13 proteins in olfactory neurons.</text>
</comment>
<comment type="similarity">
    <text evidence="6">Belongs to the PDE6D/unc-119 family.</text>
</comment>
<organism>
    <name type="scientific">Caenorhabditis elegans</name>
    <dbReference type="NCBI Taxonomy" id="6239"/>
    <lineage>
        <taxon>Eukaryota</taxon>
        <taxon>Metazoa</taxon>
        <taxon>Ecdysozoa</taxon>
        <taxon>Nematoda</taxon>
        <taxon>Chromadorea</taxon>
        <taxon>Rhabditida</taxon>
        <taxon>Rhabditina</taxon>
        <taxon>Rhabditomorpha</taxon>
        <taxon>Rhabditoidea</taxon>
        <taxon>Rhabditidae</taxon>
        <taxon>Peloderinae</taxon>
        <taxon>Caenorhabditis</taxon>
    </lineage>
</organism>
<sequence length="219" mass="25264">MKAEQQQQSIAPGSATFPSQMPRPPPVTEQAITTEAELLAKNQITPNDVLALPGITQGFLCSPSANVYNIEFTKFQIRDLDTEHVLFEIAKPENETEENLQAQAESARYVRYRFAPNFLKLKTVGATVEFKVGDVPITHFRMIERHFFKDRLLKCFDFEFGFCMPNSRNNCEHIYEFPQLSQQLMDDMINNPNETRSDSFYFVENKLVMHNKADYSYDA</sequence>
<keyword id="KW-0970">Cilium biogenesis/degradation</keyword>
<keyword id="KW-0217">Developmental protein</keyword>
<keyword id="KW-0446">Lipid-binding</keyword>
<keyword id="KW-0653">Protein transport</keyword>
<keyword id="KW-1185">Reference proteome</keyword>
<keyword id="KW-0813">Transport</keyword>
<dbReference type="EMBL" id="U32854">
    <property type="protein sequence ID" value="AAC46919.1"/>
    <property type="molecule type" value="Genomic_DNA"/>
</dbReference>
<dbReference type="EMBL" id="Z73428">
    <property type="protein sequence ID" value="CAA97807.1"/>
    <property type="molecule type" value="Genomic_DNA"/>
</dbReference>
<dbReference type="PIR" id="T23761">
    <property type="entry name" value="T23761"/>
</dbReference>
<dbReference type="RefSeq" id="NP_001255089.1">
    <property type="nucleotide sequence ID" value="NM_001268160.4"/>
</dbReference>
<dbReference type="SMR" id="Q10658"/>
<dbReference type="BioGRID" id="41706">
    <property type="interactions" value="6"/>
</dbReference>
<dbReference type="DIP" id="DIP-26782N"/>
<dbReference type="FunCoup" id="Q10658">
    <property type="interactions" value="1797"/>
</dbReference>
<dbReference type="IntAct" id="Q10658">
    <property type="interactions" value="2"/>
</dbReference>
<dbReference type="STRING" id="6239.M142.1c.1"/>
<dbReference type="PaxDb" id="6239-M142.1c"/>
<dbReference type="EnsemblMetazoa" id="M142.1a.1">
    <property type="protein sequence ID" value="M142.1a.1"/>
    <property type="gene ID" value="WBGene00006843"/>
</dbReference>
<dbReference type="GeneID" id="176519"/>
<dbReference type="KEGG" id="cel:CELE_M142.1"/>
<dbReference type="UCSC" id="M142.1">
    <property type="organism name" value="c. elegans"/>
</dbReference>
<dbReference type="AGR" id="WB:WBGene00006843"/>
<dbReference type="CTD" id="31664"/>
<dbReference type="WormBase" id="M142.1a">
    <property type="protein sequence ID" value="CE06203"/>
    <property type="gene ID" value="WBGene00006843"/>
    <property type="gene designation" value="unc-119"/>
</dbReference>
<dbReference type="eggNOG" id="KOG4037">
    <property type="taxonomic scope" value="Eukaryota"/>
</dbReference>
<dbReference type="GeneTree" id="ENSGT00390000014595"/>
<dbReference type="HOGENOM" id="CLU_088825_1_1_1"/>
<dbReference type="InParanoid" id="Q10658"/>
<dbReference type="OrthoDB" id="10248777at2759"/>
<dbReference type="PhylomeDB" id="Q10658"/>
<dbReference type="Reactome" id="R-CEL-5624138">
    <property type="pathway name" value="Trafficking of myristoylated proteins to the cilium"/>
</dbReference>
<dbReference type="PRO" id="PR:Q10658"/>
<dbReference type="Proteomes" id="UP000001940">
    <property type="component" value="Chromosome III"/>
</dbReference>
<dbReference type="Bgee" id="WBGene00006843">
    <property type="expression patterns" value="Expressed in pharyngeal muscle cell (C elegans) and 3 other cell types or tissues"/>
</dbReference>
<dbReference type="ExpressionAtlas" id="Q10658">
    <property type="expression patterns" value="baseline and differential"/>
</dbReference>
<dbReference type="GO" id="GO:0030424">
    <property type="term" value="C:axon"/>
    <property type="evidence" value="ECO:0000314"/>
    <property type="project" value="WormBase"/>
</dbReference>
<dbReference type="GO" id="GO:0005929">
    <property type="term" value="C:cilium"/>
    <property type="evidence" value="ECO:0000318"/>
    <property type="project" value="GO_Central"/>
</dbReference>
<dbReference type="GO" id="GO:0008289">
    <property type="term" value="F:lipid binding"/>
    <property type="evidence" value="ECO:0000318"/>
    <property type="project" value="GO_Central"/>
</dbReference>
<dbReference type="GO" id="GO:0010171">
    <property type="term" value="P:body morphogenesis"/>
    <property type="evidence" value="ECO:0000315"/>
    <property type="project" value="WormBase"/>
</dbReference>
<dbReference type="GO" id="GO:0007635">
    <property type="term" value="P:chemosensory behavior"/>
    <property type="evidence" value="ECO:0000315"/>
    <property type="project" value="WormBase"/>
</dbReference>
<dbReference type="GO" id="GO:0060271">
    <property type="term" value="P:cilium assembly"/>
    <property type="evidence" value="ECO:0000315"/>
    <property type="project" value="WormBase"/>
</dbReference>
<dbReference type="GO" id="GO:0040024">
    <property type="term" value="P:dauer larval development"/>
    <property type="evidence" value="ECO:0000315"/>
    <property type="project" value="WormBase"/>
</dbReference>
<dbReference type="GO" id="GO:0007631">
    <property type="term" value="P:feeding behavior"/>
    <property type="evidence" value="ECO:0000315"/>
    <property type="project" value="WormBase"/>
</dbReference>
<dbReference type="GO" id="GO:0042953">
    <property type="term" value="P:lipoprotein transport"/>
    <property type="evidence" value="ECO:0000318"/>
    <property type="project" value="GO_Central"/>
</dbReference>
<dbReference type="GO" id="GO:0040011">
    <property type="term" value="P:locomotion"/>
    <property type="evidence" value="ECO:0000315"/>
    <property type="project" value="WormBase"/>
</dbReference>
<dbReference type="GO" id="GO:0030517">
    <property type="term" value="P:negative regulation of axon extension"/>
    <property type="evidence" value="ECO:0000315"/>
    <property type="project" value="WormBase"/>
</dbReference>
<dbReference type="GO" id="GO:0007399">
    <property type="term" value="P:nervous system development"/>
    <property type="evidence" value="ECO:0000318"/>
    <property type="project" value="GO_Central"/>
</dbReference>
<dbReference type="GO" id="GO:0046662">
    <property type="term" value="P:regulation of egg-laying behavior"/>
    <property type="evidence" value="ECO:0000315"/>
    <property type="project" value="WormBase"/>
</dbReference>
<dbReference type="GO" id="GO:0043051">
    <property type="term" value="P:regulation of nematode pharyngeal pumping"/>
    <property type="evidence" value="ECO:0000315"/>
    <property type="project" value="WormBase"/>
</dbReference>
<dbReference type="GO" id="GO:0022414">
    <property type="term" value="P:reproductive process"/>
    <property type="evidence" value="ECO:0000315"/>
    <property type="project" value="WormBase"/>
</dbReference>
<dbReference type="FunFam" id="2.70.50.40:FF:000005">
    <property type="entry name" value="Protein unc-119"/>
    <property type="match status" value="1"/>
</dbReference>
<dbReference type="Gene3D" id="2.70.50.40">
    <property type="entry name" value="GMP phosphodiesterase, delta subunit"/>
    <property type="match status" value="1"/>
</dbReference>
<dbReference type="InterPro" id="IPR014756">
    <property type="entry name" value="Ig_E-set"/>
</dbReference>
<dbReference type="InterPro" id="IPR051519">
    <property type="entry name" value="PDE6D_unc-119_myristoyl-bd"/>
</dbReference>
<dbReference type="InterPro" id="IPR008015">
    <property type="entry name" value="PDED_dom"/>
</dbReference>
<dbReference type="InterPro" id="IPR037036">
    <property type="entry name" value="PDED_dom_sf"/>
</dbReference>
<dbReference type="PANTHER" id="PTHR12951:SF1">
    <property type="entry name" value="PROTEIN UNC-119 HOMOLOG"/>
    <property type="match status" value="1"/>
</dbReference>
<dbReference type="PANTHER" id="PTHR12951">
    <property type="entry name" value="RETINAL PROTEIN 4"/>
    <property type="match status" value="1"/>
</dbReference>
<dbReference type="Pfam" id="PF05351">
    <property type="entry name" value="GMP_PDE_delta"/>
    <property type="match status" value="1"/>
</dbReference>
<dbReference type="SUPFAM" id="SSF81296">
    <property type="entry name" value="E set domains"/>
    <property type="match status" value="1"/>
</dbReference>
<accession>Q10658</accession>
<feature type="chain" id="PRO_0000221216" description="Protein unc-119">
    <location>
        <begin position="1"/>
        <end position="219"/>
    </location>
</feature>
<feature type="region of interest" description="Disordered" evidence="2">
    <location>
        <begin position="1"/>
        <end position="27"/>
    </location>
</feature>
<feature type="compositionally biased region" description="Polar residues" evidence="2">
    <location>
        <begin position="1"/>
        <end position="19"/>
    </location>
</feature>
<feature type="binding site" evidence="1">
    <location>
        <position position="112"/>
    </location>
    <ligand>
        <name>tetradecanoate</name>
        <dbReference type="ChEBI" id="CHEBI:30807"/>
    </ligand>
</feature>
<name>UN119_CAEEL</name>
<protein>
    <recommendedName>
        <fullName>Protein unc-119</fullName>
    </recommendedName>
    <alternativeName>
        <fullName>Uncoordinated protein 119</fullName>
    </alternativeName>
</protein>
<evidence type="ECO:0000250" key="1"/>
<evidence type="ECO:0000256" key="2">
    <source>
        <dbReference type="SAM" id="MobiDB-lite"/>
    </source>
</evidence>
<evidence type="ECO:0000269" key="3">
    <source>
    </source>
</evidence>
<evidence type="ECO:0000269" key="4">
    <source>
    </source>
</evidence>
<evidence type="ECO:0000269" key="5">
    <source>
    </source>
</evidence>
<evidence type="ECO:0000305" key="6"/>
<reference key="1">
    <citation type="journal article" date="1995" name="Genetics">
        <title>Identification and cloning of unc-119, a gene expressed in the Caenorhabditis elegans nervous system.</title>
        <authorList>
            <person name="Maduro M.F."/>
            <person name="Pilgrim D.B."/>
        </authorList>
    </citation>
    <scope>NUCLEOTIDE SEQUENCE [GENOMIC DNA]</scope>
    <scope>FUNCTION</scope>
    <scope>TISSUE SPECIFICITY</scope>
    <scope>DISRUPTION PHENOTYPE</scope>
    <source>
        <strain>Bristol N2</strain>
    </source>
</reference>
<reference key="2">
    <citation type="journal article" date="1998" name="Science">
        <title>Genome sequence of the nematode C. elegans: a platform for investigating biology.</title>
        <authorList>
            <consortium name="The C. elegans sequencing consortium"/>
        </authorList>
    </citation>
    <scope>NUCLEOTIDE SEQUENCE [LARGE SCALE GENOMIC DNA]</scope>
    <source>
        <strain>Bristol N2</strain>
    </source>
</reference>
<reference key="3">
    <citation type="journal article" date="2011" name="Genes Dev.">
        <title>An ARL3-UNC119-RP2 GTPase cycle targets myristoylated NPHP3 to the primary cilium.</title>
        <authorList>
            <person name="Wright K.J."/>
            <person name="Baye L.M."/>
            <person name="Olivier-Mason A."/>
            <person name="Mukhopadhyay S."/>
            <person name="Sang L."/>
            <person name="Kwong M."/>
            <person name="Wang W."/>
            <person name="Pretorius P.R."/>
            <person name="Sheffield V.C."/>
            <person name="Sengupta P."/>
            <person name="Slusarski D.C."/>
            <person name="Jackson P.K."/>
        </authorList>
    </citation>
    <scope>FUNCTION</scope>
</reference>
<reference key="4">
    <citation type="journal article" date="2011" name="Nat. Neurosci.">
        <title>UNC119 is required for G protein trafficking in sensory neurons.</title>
        <authorList>
            <person name="Zhang H."/>
            <person name="Constantine R."/>
            <person name="Vorobiev S."/>
            <person name="Chen Y."/>
            <person name="Seetharaman J."/>
            <person name="Huang Y.J."/>
            <person name="Xiao R."/>
            <person name="Montelione G.T."/>
            <person name="Gerstner C.D."/>
            <person name="Davis M.W."/>
            <person name="Inana G."/>
            <person name="Whitby F.G."/>
            <person name="Jorgensen E.M."/>
            <person name="Hill C.P."/>
            <person name="Tong L."/>
            <person name="Baehr W."/>
        </authorList>
    </citation>
    <scope>DISRUPTION PHENOTYPE</scope>
</reference>